<name>HTPG_XANCP</name>
<feature type="chain" id="PRO_0000063028" description="Chaperone protein HtpG">
    <location>
        <begin position="1"/>
        <end position="634"/>
    </location>
</feature>
<feature type="region of interest" description="A; substrate-binding" evidence="1">
    <location>
        <begin position="1"/>
        <end position="342"/>
    </location>
</feature>
<feature type="region of interest" description="B" evidence="1">
    <location>
        <begin position="343"/>
        <end position="559"/>
    </location>
</feature>
<feature type="region of interest" description="C" evidence="1">
    <location>
        <begin position="560"/>
        <end position="634"/>
    </location>
</feature>
<protein>
    <recommendedName>
        <fullName evidence="1">Chaperone protein HtpG</fullName>
    </recommendedName>
    <alternativeName>
        <fullName evidence="1">Heat shock protein HtpG</fullName>
    </alternativeName>
    <alternativeName>
        <fullName evidence="1">High temperature protein G</fullName>
    </alternativeName>
</protein>
<reference key="1">
    <citation type="journal article" date="2002" name="Nature">
        <title>Comparison of the genomes of two Xanthomonas pathogens with differing host specificities.</title>
        <authorList>
            <person name="da Silva A.C.R."/>
            <person name="Ferro J.A."/>
            <person name="Reinach F.C."/>
            <person name="Farah C.S."/>
            <person name="Furlan L.R."/>
            <person name="Quaggio R.B."/>
            <person name="Monteiro-Vitorello C.B."/>
            <person name="Van Sluys M.A."/>
            <person name="Almeida N.F. Jr."/>
            <person name="Alves L.M.C."/>
            <person name="do Amaral A.M."/>
            <person name="Bertolini M.C."/>
            <person name="Camargo L.E.A."/>
            <person name="Camarotte G."/>
            <person name="Cannavan F."/>
            <person name="Cardozo J."/>
            <person name="Chambergo F."/>
            <person name="Ciapina L.P."/>
            <person name="Cicarelli R.M.B."/>
            <person name="Coutinho L.L."/>
            <person name="Cursino-Santos J.R."/>
            <person name="El-Dorry H."/>
            <person name="Faria J.B."/>
            <person name="Ferreira A.J.S."/>
            <person name="Ferreira R.C.C."/>
            <person name="Ferro M.I.T."/>
            <person name="Formighieri E.F."/>
            <person name="Franco M.C."/>
            <person name="Greggio C.C."/>
            <person name="Gruber A."/>
            <person name="Katsuyama A.M."/>
            <person name="Kishi L.T."/>
            <person name="Leite R.P."/>
            <person name="Lemos E.G.M."/>
            <person name="Lemos M.V.F."/>
            <person name="Locali E.C."/>
            <person name="Machado M.A."/>
            <person name="Madeira A.M.B.N."/>
            <person name="Martinez-Rossi N.M."/>
            <person name="Martins E.C."/>
            <person name="Meidanis J."/>
            <person name="Menck C.F.M."/>
            <person name="Miyaki C.Y."/>
            <person name="Moon D.H."/>
            <person name="Moreira L.M."/>
            <person name="Novo M.T.M."/>
            <person name="Okura V.K."/>
            <person name="Oliveira M.C."/>
            <person name="Oliveira V.R."/>
            <person name="Pereira H.A."/>
            <person name="Rossi A."/>
            <person name="Sena J.A.D."/>
            <person name="Silva C."/>
            <person name="de Souza R.F."/>
            <person name="Spinola L.A.F."/>
            <person name="Takita M.A."/>
            <person name="Tamura R.E."/>
            <person name="Teixeira E.C."/>
            <person name="Tezza R.I.D."/>
            <person name="Trindade dos Santos M."/>
            <person name="Truffi D."/>
            <person name="Tsai S.M."/>
            <person name="White F.F."/>
            <person name="Setubal J.C."/>
            <person name="Kitajima J.P."/>
        </authorList>
    </citation>
    <scope>NUCLEOTIDE SEQUENCE [LARGE SCALE GENOMIC DNA]</scope>
    <source>
        <strain>ATCC 33913 / DSM 3586 / NCPPB 528 / LMG 568 / P 25</strain>
    </source>
</reference>
<gene>
    <name evidence="1" type="primary">htpG</name>
    <name type="ordered locus">XCC2393</name>
</gene>
<proteinExistence type="inferred from homology"/>
<keyword id="KW-0067">ATP-binding</keyword>
<keyword id="KW-0143">Chaperone</keyword>
<keyword id="KW-0963">Cytoplasm</keyword>
<keyword id="KW-0547">Nucleotide-binding</keyword>
<keyword id="KW-1185">Reference proteome</keyword>
<keyword id="KW-0346">Stress response</keyword>
<dbReference type="EMBL" id="AE008922">
    <property type="protein sequence ID" value="AAM41671.1"/>
    <property type="molecule type" value="Genomic_DNA"/>
</dbReference>
<dbReference type="RefSeq" id="NP_637747.1">
    <property type="nucleotide sequence ID" value="NC_003902.1"/>
</dbReference>
<dbReference type="RefSeq" id="WP_011037535.1">
    <property type="nucleotide sequence ID" value="NC_003902.1"/>
</dbReference>
<dbReference type="SMR" id="Q8P855"/>
<dbReference type="STRING" id="190485.XCC2393"/>
<dbReference type="EnsemblBacteria" id="AAM41671">
    <property type="protein sequence ID" value="AAM41671"/>
    <property type="gene ID" value="XCC2393"/>
</dbReference>
<dbReference type="KEGG" id="xcc:XCC2393"/>
<dbReference type="PATRIC" id="fig|190485.4.peg.2549"/>
<dbReference type="eggNOG" id="COG0326">
    <property type="taxonomic scope" value="Bacteria"/>
</dbReference>
<dbReference type="HOGENOM" id="CLU_006684_3_0_6"/>
<dbReference type="OrthoDB" id="9802640at2"/>
<dbReference type="Proteomes" id="UP000001010">
    <property type="component" value="Chromosome"/>
</dbReference>
<dbReference type="GO" id="GO:0005829">
    <property type="term" value="C:cytosol"/>
    <property type="evidence" value="ECO:0000318"/>
    <property type="project" value="GO_Central"/>
</dbReference>
<dbReference type="GO" id="GO:0005524">
    <property type="term" value="F:ATP binding"/>
    <property type="evidence" value="ECO:0000318"/>
    <property type="project" value="GO_Central"/>
</dbReference>
<dbReference type="GO" id="GO:0016887">
    <property type="term" value="F:ATP hydrolysis activity"/>
    <property type="evidence" value="ECO:0000318"/>
    <property type="project" value="GO_Central"/>
</dbReference>
<dbReference type="GO" id="GO:0140662">
    <property type="term" value="F:ATP-dependent protein folding chaperone"/>
    <property type="evidence" value="ECO:0007669"/>
    <property type="project" value="InterPro"/>
</dbReference>
<dbReference type="GO" id="GO:0051082">
    <property type="term" value="F:unfolded protein binding"/>
    <property type="evidence" value="ECO:0000318"/>
    <property type="project" value="GO_Central"/>
</dbReference>
<dbReference type="GO" id="GO:0006974">
    <property type="term" value="P:DNA damage response"/>
    <property type="evidence" value="ECO:0000318"/>
    <property type="project" value="GO_Central"/>
</dbReference>
<dbReference type="GO" id="GO:0006457">
    <property type="term" value="P:protein folding"/>
    <property type="evidence" value="ECO:0000318"/>
    <property type="project" value="GO_Central"/>
</dbReference>
<dbReference type="GO" id="GO:0009408">
    <property type="term" value="P:response to heat"/>
    <property type="evidence" value="ECO:0000318"/>
    <property type="project" value="GO_Central"/>
</dbReference>
<dbReference type="CDD" id="cd16927">
    <property type="entry name" value="HATPase_Hsp90-like"/>
    <property type="match status" value="1"/>
</dbReference>
<dbReference type="FunFam" id="1.20.120.790:FF:000008">
    <property type="entry name" value="Chaperone protein HtpG"/>
    <property type="match status" value="1"/>
</dbReference>
<dbReference type="FunFam" id="3.30.230.80:FF:000002">
    <property type="entry name" value="Molecular chaperone HtpG"/>
    <property type="match status" value="1"/>
</dbReference>
<dbReference type="FunFam" id="3.30.565.10:FF:000009">
    <property type="entry name" value="Molecular chaperone HtpG"/>
    <property type="match status" value="1"/>
</dbReference>
<dbReference type="Gene3D" id="3.30.230.80">
    <property type="match status" value="1"/>
</dbReference>
<dbReference type="Gene3D" id="3.40.50.11260">
    <property type="match status" value="1"/>
</dbReference>
<dbReference type="Gene3D" id="1.20.120.790">
    <property type="entry name" value="Heat shock protein 90, C-terminal domain"/>
    <property type="match status" value="1"/>
</dbReference>
<dbReference type="Gene3D" id="3.30.565.10">
    <property type="entry name" value="Histidine kinase-like ATPase, C-terminal domain"/>
    <property type="match status" value="1"/>
</dbReference>
<dbReference type="HAMAP" id="MF_00505">
    <property type="entry name" value="HSP90"/>
    <property type="match status" value="1"/>
</dbReference>
<dbReference type="InterPro" id="IPR036890">
    <property type="entry name" value="HATPase_C_sf"/>
</dbReference>
<dbReference type="InterPro" id="IPR019805">
    <property type="entry name" value="Heat_shock_protein_90_CS"/>
</dbReference>
<dbReference type="InterPro" id="IPR037196">
    <property type="entry name" value="HSP90_C"/>
</dbReference>
<dbReference type="InterPro" id="IPR001404">
    <property type="entry name" value="Hsp90_fam"/>
</dbReference>
<dbReference type="InterPro" id="IPR020575">
    <property type="entry name" value="Hsp90_N"/>
</dbReference>
<dbReference type="InterPro" id="IPR020568">
    <property type="entry name" value="Ribosomal_Su5_D2-typ_SF"/>
</dbReference>
<dbReference type="NCBIfam" id="NF003555">
    <property type="entry name" value="PRK05218.1"/>
    <property type="match status" value="1"/>
</dbReference>
<dbReference type="PANTHER" id="PTHR11528">
    <property type="entry name" value="HEAT SHOCK PROTEIN 90 FAMILY MEMBER"/>
    <property type="match status" value="1"/>
</dbReference>
<dbReference type="Pfam" id="PF13589">
    <property type="entry name" value="HATPase_c_3"/>
    <property type="match status" value="1"/>
</dbReference>
<dbReference type="Pfam" id="PF00183">
    <property type="entry name" value="HSP90"/>
    <property type="match status" value="1"/>
</dbReference>
<dbReference type="PIRSF" id="PIRSF002583">
    <property type="entry name" value="Hsp90"/>
    <property type="match status" value="1"/>
</dbReference>
<dbReference type="PRINTS" id="PR00775">
    <property type="entry name" value="HEATSHOCK90"/>
</dbReference>
<dbReference type="SMART" id="SM00387">
    <property type="entry name" value="HATPase_c"/>
    <property type="match status" value="1"/>
</dbReference>
<dbReference type="SUPFAM" id="SSF55874">
    <property type="entry name" value="ATPase domain of HSP90 chaperone/DNA topoisomerase II/histidine kinase"/>
    <property type="match status" value="1"/>
</dbReference>
<dbReference type="SUPFAM" id="SSF110942">
    <property type="entry name" value="HSP90 C-terminal domain"/>
    <property type="match status" value="1"/>
</dbReference>
<dbReference type="SUPFAM" id="SSF54211">
    <property type="entry name" value="Ribosomal protein S5 domain 2-like"/>
    <property type="match status" value="1"/>
</dbReference>
<dbReference type="PROSITE" id="PS00298">
    <property type="entry name" value="HSP90"/>
    <property type="match status" value="1"/>
</dbReference>
<comment type="function">
    <text evidence="1">Molecular chaperone. Has ATPase activity.</text>
</comment>
<comment type="subunit">
    <text evidence="1">Homodimer.</text>
</comment>
<comment type="subcellular location">
    <subcellularLocation>
        <location evidence="1">Cytoplasm</location>
    </subcellularLocation>
</comment>
<comment type="similarity">
    <text evidence="1">Belongs to the heat shock protein 90 family.</text>
</comment>
<organism>
    <name type="scientific">Xanthomonas campestris pv. campestris (strain ATCC 33913 / DSM 3586 / NCPPB 528 / LMG 568 / P 25)</name>
    <dbReference type="NCBI Taxonomy" id="190485"/>
    <lineage>
        <taxon>Bacteria</taxon>
        <taxon>Pseudomonadati</taxon>
        <taxon>Pseudomonadota</taxon>
        <taxon>Gammaproteobacteria</taxon>
        <taxon>Lysobacterales</taxon>
        <taxon>Lysobacteraceae</taxon>
        <taxon>Xanthomonas</taxon>
    </lineage>
</organism>
<evidence type="ECO:0000255" key="1">
    <source>
        <dbReference type="HAMAP-Rule" id="MF_00505"/>
    </source>
</evidence>
<accession>Q8P855</accession>
<sequence length="634" mass="70841">MTVDTDKQTLGFQTEVKQLLQLMIHSLYSNKEIFLRELVSNAADAADKLRFEALVKPELLEGSGELRIRVDFDKEARTVTIDDNGIGMSREDAVSHLGTIAKSGTADFLKHLSGDQKKDANLIGQFGVGFYSAFIVADQVDVYSRRAGLPASDGVHWSSRGEGEFEVASVDKPERGTRIVLHLKDGEDSFADGWTLRNILKKYSDHIGLPIEMRKEHYGEDADKPAEPEWEVVNRASALWTRPKSEIKDEEYQEFYKHVAHDAGNPLAWSHNKVEGKLDYTSLLFVPGRAPFDLYHRDSAKGLKLYVQRVFIMDQAEQFLPLYLRFIKGVVDSADLSLNVSREILQSGPVVDSMKSALTKRALDMLEKLAKDKPDDYATFWRNFGQALKEGPAEDYANREKVAGLLRFSSTHDTTGAQSVALADYVGRMTEGQDKLYYLTGESYAQIKDSPHLEVFRKKGIEVLLLTDRIDEWLMSYLTEFDSKSFVDVARGDLDLGKLDSEEDKKAQEEVAKSKEGLASRIKAALGDDVAEVRVSHRLTDSPAILAIGQGDLGLQMRQLLEASGQAVPETKPVFEFNPAHPLIEKLDAEQDMDRFGDLSRVLFDQAALAAGDSLKDPAGYVRRLNKLLLELSA</sequence>